<comment type="function">
    <text evidence="1">RuBisCO catalyzes two reactions: the carboxylation of D-ribulose 1,5-bisphosphate, the primary event in carbon dioxide fixation, as well as the oxidative fragmentation of the pentose substrate in the photorespiration process. Both reactions occur simultaneously and in competition at the same active site.</text>
</comment>
<comment type="catalytic activity">
    <reaction evidence="1">
        <text>2 (2R)-3-phosphoglycerate + 2 H(+) = D-ribulose 1,5-bisphosphate + CO2 + H2O</text>
        <dbReference type="Rhea" id="RHEA:23124"/>
        <dbReference type="ChEBI" id="CHEBI:15377"/>
        <dbReference type="ChEBI" id="CHEBI:15378"/>
        <dbReference type="ChEBI" id="CHEBI:16526"/>
        <dbReference type="ChEBI" id="CHEBI:57870"/>
        <dbReference type="ChEBI" id="CHEBI:58272"/>
        <dbReference type="EC" id="4.1.1.39"/>
    </reaction>
</comment>
<comment type="catalytic activity">
    <reaction evidence="1">
        <text>D-ribulose 1,5-bisphosphate + O2 = 2-phosphoglycolate + (2R)-3-phosphoglycerate + 2 H(+)</text>
        <dbReference type="Rhea" id="RHEA:36631"/>
        <dbReference type="ChEBI" id="CHEBI:15378"/>
        <dbReference type="ChEBI" id="CHEBI:15379"/>
        <dbReference type="ChEBI" id="CHEBI:57870"/>
        <dbReference type="ChEBI" id="CHEBI:58033"/>
        <dbReference type="ChEBI" id="CHEBI:58272"/>
    </reaction>
</comment>
<comment type="cofactor">
    <cofactor evidence="1">
        <name>Mg(2+)</name>
        <dbReference type="ChEBI" id="CHEBI:18420"/>
    </cofactor>
    <text evidence="1">Binds 1 Mg(2+) ion per subunit.</text>
</comment>
<comment type="subunit">
    <text evidence="1">Heterohexadecamer of 8 large chains and 8 small chains; disulfide-linked. The disulfide link is formed within the large subunit homodimers.</text>
</comment>
<comment type="subcellular location">
    <subcellularLocation>
        <location>Plastid</location>
        <location>Chloroplast</location>
    </subcellularLocation>
</comment>
<comment type="PTM">
    <text evidence="1">The disulfide bond which can form in the large chain dimeric partners within the hexadecamer appears to be associated with oxidative stress and protein turnover.</text>
</comment>
<comment type="miscellaneous">
    <text evidence="1">The basic functional RuBisCO is composed of a large chain homodimer in a 'head-to-tail' conformation. In form I RuBisCO this homodimer is arranged in a barrel-like tetramer with the small subunits forming a tetrameric 'cap' on each end of the 'barrel'.</text>
</comment>
<comment type="similarity">
    <text evidence="1">Belongs to the RuBisCO large chain family. Type I subfamily.</text>
</comment>
<feature type="chain" id="PRO_0000062527" description="Ribulose bisphosphate carboxylase large chain">
    <location>
        <begin position="1" status="less than"/>
        <end position="455" status="greater than"/>
    </location>
</feature>
<feature type="active site" description="Proton acceptor" evidence="1">
    <location>
        <position position="166"/>
    </location>
</feature>
<feature type="active site" description="Proton acceptor" evidence="1">
    <location>
        <position position="285"/>
    </location>
</feature>
<feature type="binding site" description="in homodimeric partner" evidence="1">
    <location>
        <position position="114"/>
    </location>
    <ligand>
        <name>substrate</name>
    </ligand>
</feature>
<feature type="binding site" evidence="1">
    <location>
        <position position="164"/>
    </location>
    <ligand>
        <name>substrate</name>
    </ligand>
</feature>
<feature type="binding site" evidence="1">
    <location>
        <position position="168"/>
    </location>
    <ligand>
        <name>substrate</name>
    </ligand>
</feature>
<feature type="binding site" description="via carbamate group" evidence="1">
    <location>
        <position position="192"/>
    </location>
    <ligand>
        <name>Mg(2+)</name>
        <dbReference type="ChEBI" id="CHEBI:18420"/>
    </ligand>
</feature>
<feature type="binding site" evidence="1">
    <location>
        <position position="194"/>
    </location>
    <ligand>
        <name>Mg(2+)</name>
        <dbReference type="ChEBI" id="CHEBI:18420"/>
    </ligand>
</feature>
<feature type="binding site" evidence="1">
    <location>
        <position position="195"/>
    </location>
    <ligand>
        <name>Mg(2+)</name>
        <dbReference type="ChEBI" id="CHEBI:18420"/>
    </ligand>
</feature>
<feature type="binding site" evidence="1">
    <location>
        <position position="286"/>
    </location>
    <ligand>
        <name>substrate</name>
    </ligand>
</feature>
<feature type="binding site" evidence="1">
    <location>
        <position position="318"/>
    </location>
    <ligand>
        <name>substrate</name>
    </ligand>
</feature>
<feature type="binding site" evidence="1">
    <location>
        <position position="370"/>
    </location>
    <ligand>
        <name>substrate</name>
    </ligand>
</feature>
<feature type="site" description="Transition state stabilizer" evidence="1">
    <location>
        <position position="325"/>
    </location>
</feature>
<feature type="modified residue" description="N6,N6,N6-trimethyllysine" evidence="1">
    <location>
        <position position="5"/>
    </location>
</feature>
<feature type="modified residue" description="N6-carboxylysine" evidence="1">
    <location>
        <position position="192"/>
    </location>
</feature>
<feature type="disulfide bond" description="Interchain; in linked form" evidence="1">
    <location>
        <position position="238"/>
    </location>
</feature>
<feature type="non-terminal residue">
    <location>
        <position position="1"/>
    </location>
</feature>
<feature type="non-terminal residue">
    <location>
        <position position="455"/>
    </location>
</feature>
<name>RBL_LUPPO</name>
<sequence length="455" mass="50317">SVGFKAGVKDYKLTYYTPDYKTKDTDILAAFRVTPQPGVPPEEAGAAVAAESSTGTWTTVWTDGLTSLDRYKGRCYHIEPVAGEESQFIAYVAYPLDLFEEGSVTNMFTSIVGNVFGFKALRALRLEDLRIPNAYVKTFQGPPHGIQVERDKLNKYGRPLLGCTIKPKLGLSAKNYGRAVYECLRGGLDFTKDDENVNSQPFMRWRDRFLFCAEALYKAQAETGEIKGHYLNATAGTCEEMIKRAVFARELGVPIVMHDYLTGGFTANTTLSHYCRDNGLLLHIHRAMHAVIDRQKNHGMHFRVLAKALRLSGGDHIHSGTVVGKLEGEREITLGFVDLLRDDFVEKDRSRGIYFTQDWVSLPGVLPVASGGIHVWHMPALTEIFGDDSVLQFGGGTLGHPWGNAPGAVANRVALEACVQARNEGRDLASEGNQIIREASKWSPELAAACEVWKE</sequence>
<proteinExistence type="inferred from homology"/>
<dbReference type="EC" id="4.1.1.39" evidence="1"/>
<dbReference type="EMBL" id="Z70052">
    <property type="protein sequence ID" value="CAA93911.1"/>
    <property type="molecule type" value="Genomic_DNA"/>
</dbReference>
<dbReference type="SMR" id="P69590"/>
<dbReference type="GO" id="GO:0009507">
    <property type="term" value="C:chloroplast"/>
    <property type="evidence" value="ECO:0007669"/>
    <property type="project" value="UniProtKB-SubCell"/>
</dbReference>
<dbReference type="GO" id="GO:0000287">
    <property type="term" value="F:magnesium ion binding"/>
    <property type="evidence" value="ECO:0007669"/>
    <property type="project" value="InterPro"/>
</dbReference>
<dbReference type="GO" id="GO:0004497">
    <property type="term" value="F:monooxygenase activity"/>
    <property type="evidence" value="ECO:0007669"/>
    <property type="project" value="UniProtKB-KW"/>
</dbReference>
<dbReference type="GO" id="GO:0016984">
    <property type="term" value="F:ribulose-bisphosphate carboxylase activity"/>
    <property type="evidence" value="ECO:0007669"/>
    <property type="project" value="UniProtKB-EC"/>
</dbReference>
<dbReference type="GO" id="GO:0009853">
    <property type="term" value="P:photorespiration"/>
    <property type="evidence" value="ECO:0007669"/>
    <property type="project" value="UniProtKB-KW"/>
</dbReference>
<dbReference type="GO" id="GO:0019253">
    <property type="term" value="P:reductive pentose-phosphate cycle"/>
    <property type="evidence" value="ECO:0007669"/>
    <property type="project" value="UniProtKB-KW"/>
</dbReference>
<dbReference type="CDD" id="cd08212">
    <property type="entry name" value="RuBisCO_large_I"/>
    <property type="match status" value="1"/>
</dbReference>
<dbReference type="FunFam" id="3.20.20.110:FF:000001">
    <property type="entry name" value="Ribulose bisphosphate carboxylase large chain"/>
    <property type="match status" value="1"/>
</dbReference>
<dbReference type="FunFam" id="3.30.70.150:FF:000001">
    <property type="entry name" value="Ribulose bisphosphate carboxylase large chain"/>
    <property type="match status" value="1"/>
</dbReference>
<dbReference type="Gene3D" id="3.20.20.110">
    <property type="entry name" value="Ribulose bisphosphate carboxylase, large subunit, C-terminal domain"/>
    <property type="match status" value="1"/>
</dbReference>
<dbReference type="Gene3D" id="3.30.70.150">
    <property type="entry name" value="RuBisCO large subunit, N-terminal domain"/>
    <property type="match status" value="1"/>
</dbReference>
<dbReference type="HAMAP" id="MF_01338">
    <property type="entry name" value="RuBisCO_L_type1"/>
    <property type="match status" value="1"/>
</dbReference>
<dbReference type="InterPro" id="IPR033966">
    <property type="entry name" value="RuBisCO"/>
</dbReference>
<dbReference type="InterPro" id="IPR020878">
    <property type="entry name" value="RuBisCo_large_chain_AS"/>
</dbReference>
<dbReference type="InterPro" id="IPR000685">
    <property type="entry name" value="RuBisCO_lsu_C"/>
</dbReference>
<dbReference type="InterPro" id="IPR036376">
    <property type="entry name" value="RuBisCO_lsu_C_sf"/>
</dbReference>
<dbReference type="InterPro" id="IPR017443">
    <property type="entry name" value="RuBisCO_lsu_fd_N"/>
</dbReference>
<dbReference type="InterPro" id="IPR036422">
    <property type="entry name" value="RuBisCO_lsu_N_sf"/>
</dbReference>
<dbReference type="InterPro" id="IPR020888">
    <property type="entry name" value="RuBisCO_lsuI"/>
</dbReference>
<dbReference type="NCBIfam" id="NF003252">
    <property type="entry name" value="PRK04208.1"/>
    <property type="match status" value="1"/>
</dbReference>
<dbReference type="PANTHER" id="PTHR42704">
    <property type="entry name" value="RIBULOSE BISPHOSPHATE CARBOXYLASE"/>
    <property type="match status" value="1"/>
</dbReference>
<dbReference type="PANTHER" id="PTHR42704:SF16">
    <property type="entry name" value="RIBULOSE BISPHOSPHATE CARBOXYLASE LARGE CHAIN"/>
    <property type="match status" value="1"/>
</dbReference>
<dbReference type="Pfam" id="PF00016">
    <property type="entry name" value="RuBisCO_large"/>
    <property type="match status" value="1"/>
</dbReference>
<dbReference type="Pfam" id="PF02788">
    <property type="entry name" value="RuBisCO_large_N"/>
    <property type="match status" value="1"/>
</dbReference>
<dbReference type="SFLD" id="SFLDG01052">
    <property type="entry name" value="RuBisCO"/>
    <property type="match status" value="1"/>
</dbReference>
<dbReference type="SFLD" id="SFLDS00014">
    <property type="entry name" value="RuBisCO"/>
    <property type="match status" value="1"/>
</dbReference>
<dbReference type="SFLD" id="SFLDG00301">
    <property type="entry name" value="RuBisCO-like_proteins"/>
    <property type="match status" value="1"/>
</dbReference>
<dbReference type="SUPFAM" id="SSF51649">
    <property type="entry name" value="RuBisCo, C-terminal domain"/>
    <property type="match status" value="1"/>
</dbReference>
<dbReference type="SUPFAM" id="SSF54966">
    <property type="entry name" value="RuBisCO, large subunit, small (N-terminal) domain"/>
    <property type="match status" value="1"/>
</dbReference>
<dbReference type="PROSITE" id="PS00157">
    <property type="entry name" value="RUBISCO_LARGE"/>
    <property type="match status" value="1"/>
</dbReference>
<geneLocation type="chloroplast"/>
<accession>P69590</accession>
<accession>P52775</accession>
<organism>
    <name type="scientific">Lupinus polyphyllus</name>
    <name type="common">Large-leaved lupine</name>
    <dbReference type="NCBI Taxonomy" id="3874"/>
    <lineage>
        <taxon>Eukaryota</taxon>
        <taxon>Viridiplantae</taxon>
        <taxon>Streptophyta</taxon>
        <taxon>Embryophyta</taxon>
        <taxon>Tracheophyta</taxon>
        <taxon>Spermatophyta</taxon>
        <taxon>Magnoliopsida</taxon>
        <taxon>eudicotyledons</taxon>
        <taxon>Gunneridae</taxon>
        <taxon>Pentapetalae</taxon>
        <taxon>rosids</taxon>
        <taxon>fabids</taxon>
        <taxon>Fabales</taxon>
        <taxon>Fabaceae</taxon>
        <taxon>Papilionoideae</taxon>
        <taxon>50 kb inversion clade</taxon>
        <taxon>genistoids sensu lato</taxon>
        <taxon>core genistoids</taxon>
        <taxon>Genisteae</taxon>
        <taxon>Lupinus</taxon>
    </lineage>
</organism>
<protein>
    <recommendedName>
        <fullName evidence="1">Ribulose bisphosphate carboxylase large chain</fullName>
        <shortName evidence="1">RuBisCO large subunit</shortName>
        <ecNumber evidence="1">4.1.1.39</ecNumber>
    </recommendedName>
</protein>
<evidence type="ECO:0000255" key="1">
    <source>
        <dbReference type="HAMAP-Rule" id="MF_01338"/>
    </source>
</evidence>
<reference key="1">
    <citation type="journal article" date="1995" name="Bot. Acta">
        <title>Molecular phylogeny of the Papilionoideae (family Leguminosae): rbcL sequences versus chemical taxonomy.</title>
        <authorList>
            <person name="Kaess E."/>
            <person name="Wink M."/>
        </authorList>
    </citation>
    <scope>NUCLEOTIDE SEQUENCE [GENOMIC DNA]</scope>
    <source>
        <tissue>Leaf</tissue>
    </source>
</reference>
<keyword id="KW-0113">Calvin cycle</keyword>
<keyword id="KW-0120">Carbon dioxide fixation</keyword>
<keyword id="KW-0150">Chloroplast</keyword>
<keyword id="KW-1015">Disulfide bond</keyword>
<keyword id="KW-0456">Lyase</keyword>
<keyword id="KW-0460">Magnesium</keyword>
<keyword id="KW-0479">Metal-binding</keyword>
<keyword id="KW-0488">Methylation</keyword>
<keyword id="KW-0503">Monooxygenase</keyword>
<keyword id="KW-0560">Oxidoreductase</keyword>
<keyword id="KW-0601">Photorespiration</keyword>
<keyword id="KW-0602">Photosynthesis</keyword>
<keyword id="KW-0934">Plastid</keyword>
<gene>
    <name evidence="1" type="primary">rbcL</name>
</gene>